<proteinExistence type="inferred from homology"/>
<organism>
    <name type="scientific">Koribacter versatilis (strain Ellin345)</name>
    <dbReference type="NCBI Taxonomy" id="204669"/>
    <lineage>
        <taxon>Bacteria</taxon>
        <taxon>Pseudomonadati</taxon>
        <taxon>Acidobacteriota</taxon>
        <taxon>Terriglobia</taxon>
        <taxon>Terriglobales</taxon>
        <taxon>Candidatus Korobacteraceae</taxon>
        <taxon>Candidatus Korobacter</taxon>
    </lineage>
</organism>
<accession>Q1INF0</accession>
<keyword id="KW-0997">Cell inner membrane</keyword>
<keyword id="KW-1003">Cell membrane</keyword>
<keyword id="KW-0407">Ion channel</keyword>
<keyword id="KW-0406">Ion transport</keyword>
<keyword id="KW-0472">Membrane</keyword>
<keyword id="KW-0479">Metal-binding</keyword>
<keyword id="KW-1185">Reference proteome</keyword>
<keyword id="KW-0915">Sodium</keyword>
<keyword id="KW-0812">Transmembrane</keyword>
<keyword id="KW-1133">Transmembrane helix</keyword>
<keyword id="KW-0813">Transport</keyword>
<feature type="chain" id="PRO_0000252856" description="Fluoride-specific ion channel FluC">
    <location>
        <begin position="1"/>
        <end position="126"/>
    </location>
</feature>
<feature type="transmembrane region" description="Helical" evidence="1">
    <location>
        <begin position="7"/>
        <end position="24"/>
    </location>
</feature>
<feature type="transmembrane region" description="Helical" evidence="1">
    <location>
        <begin position="35"/>
        <end position="55"/>
    </location>
</feature>
<feature type="transmembrane region" description="Helical" evidence="1">
    <location>
        <begin position="69"/>
        <end position="89"/>
    </location>
</feature>
<feature type="transmembrane region" description="Helical" evidence="1">
    <location>
        <begin position="98"/>
        <end position="118"/>
    </location>
</feature>
<feature type="binding site" evidence="1">
    <location>
        <position position="77"/>
    </location>
    <ligand>
        <name>Na(+)</name>
        <dbReference type="ChEBI" id="CHEBI:29101"/>
        <note>structural</note>
    </ligand>
</feature>
<feature type="binding site" evidence="1">
    <location>
        <position position="80"/>
    </location>
    <ligand>
        <name>Na(+)</name>
        <dbReference type="ChEBI" id="CHEBI:29101"/>
        <note>structural</note>
    </ligand>
</feature>
<dbReference type="EMBL" id="CP000360">
    <property type="protein sequence ID" value="ABF41600.1"/>
    <property type="molecule type" value="Genomic_DNA"/>
</dbReference>
<dbReference type="RefSeq" id="WP_011523401.1">
    <property type="nucleotide sequence ID" value="NC_008009.1"/>
</dbReference>
<dbReference type="SMR" id="Q1INF0"/>
<dbReference type="STRING" id="204669.Acid345_2599"/>
<dbReference type="EnsemblBacteria" id="ABF41600">
    <property type="protein sequence ID" value="ABF41600"/>
    <property type="gene ID" value="Acid345_2599"/>
</dbReference>
<dbReference type="KEGG" id="aba:Acid345_2599"/>
<dbReference type="eggNOG" id="COG0239">
    <property type="taxonomic scope" value="Bacteria"/>
</dbReference>
<dbReference type="HOGENOM" id="CLU_114342_3_0_0"/>
<dbReference type="OrthoDB" id="9815830at2"/>
<dbReference type="Proteomes" id="UP000002432">
    <property type="component" value="Chromosome"/>
</dbReference>
<dbReference type="GO" id="GO:0005886">
    <property type="term" value="C:plasma membrane"/>
    <property type="evidence" value="ECO:0007669"/>
    <property type="project" value="UniProtKB-SubCell"/>
</dbReference>
<dbReference type="GO" id="GO:0062054">
    <property type="term" value="F:fluoride channel activity"/>
    <property type="evidence" value="ECO:0007669"/>
    <property type="project" value="UniProtKB-UniRule"/>
</dbReference>
<dbReference type="GO" id="GO:0046872">
    <property type="term" value="F:metal ion binding"/>
    <property type="evidence" value="ECO:0007669"/>
    <property type="project" value="UniProtKB-KW"/>
</dbReference>
<dbReference type="GO" id="GO:0140114">
    <property type="term" value="P:cellular detoxification of fluoride"/>
    <property type="evidence" value="ECO:0007669"/>
    <property type="project" value="UniProtKB-UniRule"/>
</dbReference>
<dbReference type="HAMAP" id="MF_00454">
    <property type="entry name" value="FluC"/>
    <property type="match status" value="1"/>
</dbReference>
<dbReference type="InterPro" id="IPR003691">
    <property type="entry name" value="FluC"/>
</dbReference>
<dbReference type="NCBIfam" id="TIGR00494">
    <property type="entry name" value="crcB"/>
    <property type="match status" value="1"/>
</dbReference>
<dbReference type="PANTHER" id="PTHR28259">
    <property type="entry name" value="FLUORIDE EXPORT PROTEIN 1-RELATED"/>
    <property type="match status" value="1"/>
</dbReference>
<dbReference type="PANTHER" id="PTHR28259:SF1">
    <property type="entry name" value="FLUORIDE EXPORT PROTEIN 1-RELATED"/>
    <property type="match status" value="1"/>
</dbReference>
<dbReference type="Pfam" id="PF02537">
    <property type="entry name" value="CRCB"/>
    <property type="match status" value="1"/>
</dbReference>
<gene>
    <name evidence="1" type="primary">fluC</name>
    <name evidence="1" type="synonym">crcB</name>
    <name type="ordered locus">Acid345_2599</name>
</gene>
<evidence type="ECO:0000255" key="1">
    <source>
        <dbReference type="HAMAP-Rule" id="MF_00454"/>
    </source>
</evidence>
<comment type="function">
    <text evidence="1">Fluoride-specific ion channel. Important for reducing fluoride concentration in the cell, thus reducing its toxicity.</text>
</comment>
<comment type="catalytic activity">
    <reaction evidence="1">
        <text>fluoride(in) = fluoride(out)</text>
        <dbReference type="Rhea" id="RHEA:76159"/>
        <dbReference type="ChEBI" id="CHEBI:17051"/>
    </reaction>
    <physiologicalReaction direction="left-to-right" evidence="1">
        <dbReference type="Rhea" id="RHEA:76160"/>
    </physiologicalReaction>
</comment>
<comment type="activity regulation">
    <text evidence="1">Na(+) is not transported, but it plays an essential structural role and its presence is essential for fluoride channel function.</text>
</comment>
<comment type="subcellular location">
    <subcellularLocation>
        <location evidence="1">Cell inner membrane</location>
        <topology evidence="1">Multi-pass membrane protein</topology>
    </subcellularLocation>
</comment>
<comment type="similarity">
    <text evidence="1">Belongs to the fluoride channel Fluc/FEX (TC 1.A.43) family.</text>
</comment>
<reference key="1">
    <citation type="journal article" date="2009" name="Appl. Environ. Microbiol.">
        <title>Three genomes from the phylum Acidobacteria provide insight into the lifestyles of these microorganisms in soils.</title>
        <authorList>
            <person name="Ward N.L."/>
            <person name="Challacombe J.F."/>
            <person name="Janssen P.H."/>
            <person name="Henrissat B."/>
            <person name="Coutinho P.M."/>
            <person name="Wu M."/>
            <person name="Xie G."/>
            <person name="Haft D.H."/>
            <person name="Sait M."/>
            <person name="Badger J."/>
            <person name="Barabote R.D."/>
            <person name="Bradley B."/>
            <person name="Brettin T.S."/>
            <person name="Brinkac L.M."/>
            <person name="Bruce D."/>
            <person name="Creasy T."/>
            <person name="Daugherty S.C."/>
            <person name="Davidsen T.M."/>
            <person name="DeBoy R.T."/>
            <person name="Detter J.C."/>
            <person name="Dodson R.J."/>
            <person name="Durkin A.S."/>
            <person name="Ganapathy A."/>
            <person name="Gwinn-Giglio M."/>
            <person name="Han C.S."/>
            <person name="Khouri H."/>
            <person name="Kiss H."/>
            <person name="Kothari S.P."/>
            <person name="Madupu R."/>
            <person name="Nelson K.E."/>
            <person name="Nelson W.C."/>
            <person name="Paulsen I."/>
            <person name="Penn K."/>
            <person name="Ren Q."/>
            <person name="Rosovitz M.J."/>
            <person name="Selengut J.D."/>
            <person name="Shrivastava S."/>
            <person name="Sullivan S.A."/>
            <person name="Tapia R."/>
            <person name="Thompson L.S."/>
            <person name="Watkins K.L."/>
            <person name="Yang Q."/>
            <person name="Yu C."/>
            <person name="Zafar N."/>
            <person name="Zhou L."/>
            <person name="Kuske C.R."/>
        </authorList>
    </citation>
    <scope>NUCLEOTIDE SEQUENCE [LARGE SCALE GENOMIC DNA]</scope>
    <source>
        <strain>Ellin345</strain>
    </source>
</reference>
<protein>
    <recommendedName>
        <fullName evidence="1">Fluoride-specific ion channel FluC</fullName>
    </recommendedName>
</protein>
<sequence>MAIREYLWVSLGGIVGACARYFLSRFTAKITGTSFPWGTLLINITGSFVLGLFLVYTTERVFVDPKWRLLIAIGFCGAYTTFSSYAYESMVYFQQGNWGLFAGNVLANNILCLAAVLGAGALVRSI</sequence>
<name>FLUC_KORVE</name>